<feature type="chain" id="PRO_0000255784" description="Bifunctional protein HldE">
    <location>
        <begin position="1"/>
        <end position="477"/>
    </location>
</feature>
<feature type="region of interest" description="Ribokinase">
    <location>
        <begin position="1"/>
        <end position="318"/>
    </location>
</feature>
<feature type="region of interest" description="Cytidylyltransferase">
    <location>
        <begin position="344"/>
        <end position="477"/>
    </location>
</feature>
<feature type="active site" evidence="1">
    <location>
        <position position="264"/>
    </location>
</feature>
<feature type="binding site" evidence="1">
    <location>
        <begin position="195"/>
        <end position="198"/>
    </location>
    <ligand>
        <name>ATP</name>
        <dbReference type="ChEBI" id="CHEBI:30616"/>
    </ligand>
</feature>
<feature type="modified residue" description="N6-acetyllysine" evidence="1">
    <location>
        <position position="179"/>
    </location>
</feature>
<accession>Q3YXJ0</accession>
<evidence type="ECO:0000255" key="1">
    <source>
        <dbReference type="HAMAP-Rule" id="MF_01603"/>
    </source>
</evidence>
<protein>
    <recommendedName>
        <fullName evidence="1">Bifunctional protein HldE</fullName>
    </recommendedName>
    <domain>
        <recommendedName>
            <fullName evidence="1">D-beta-D-heptose 7-phosphate kinase</fullName>
            <ecNumber evidence="1">2.7.1.167</ecNumber>
        </recommendedName>
        <alternativeName>
            <fullName evidence="1">D-beta-D-heptose 7-phosphotransferase</fullName>
        </alternativeName>
        <alternativeName>
            <fullName evidence="1">D-glycero-beta-D-manno-heptose-7-phosphate kinase</fullName>
        </alternativeName>
    </domain>
    <domain>
        <recommendedName>
            <fullName evidence="1">D-beta-D-heptose 1-phosphate adenylyltransferase</fullName>
            <ecNumber evidence="1">2.7.7.70</ecNumber>
        </recommendedName>
        <alternativeName>
            <fullName evidence="1">D-glycero-beta-D-manno-heptose 1-phosphate adenylyltransferase</fullName>
        </alternativeName>
    </domain>
</protein>
<dbReference type="EC" id="2.7.1.167" evidence="1"/>
<dbReference type="EC" id="2.7.7.70" evidence="1"/>
<dbReference type="EMBL" id="CP000038">
    <property type="protein sequence ID" value="AAZ89772.1"/>
    <property type="molecule type" value="Genomic_DNA"/>
</dbReference>
<dbReference type="RefSeq" id="WP_000869159.1">
    <property type="nucleotide sequence ID" value="NC_007384.1"/>
</dbReference>
<dbReference type="SMR" id="Q3YXJ0"/>
<dbReference type="KEGG" id="ssn:SSON_3189"/>
<dbReference type="HOGENOM" id="CLU_021150_2_1_6"/>
<dbReference type="UniPathway" id="UPA00356">
    <property type="reaction ID" value="UER00437"/>
</dbReference>
<dbReference type="UniPathway" id="UPA00356">
    <property type="reaction ID" value="UER00439"/>
</dbReference>
<dbReference type="Proteomes" id="UP000002529">
    <property type="component" value="Chromosome"/>
</dbReference>
<dbReference type="GO" id="GO:0005829">
    <property type="term" value="C:cytosol"/>
    <property type="evidence" value="ECO:0007669"/>
    <property type="project" value="TreeGrafter"/>
</dbReference>
<dbReference type="GO" id="GO:0005524">
    <property type="term" value="F:ATP binding"/>
    <property type="evidence" value="ECO:0007669"/>
    <property type="project" value="UniProtKB-UniRule"/>
</dbReference>
<dbReference type="GO" id="GO:0033785">
    <property type="term" value="F:heptose 7-phosphate kinase activity"/>
    <property type="evidence" value="ECO:0007669"/>
    <property type="project" value="UniProtKB-UniRule"/>
</dbReference>
<dbReference type="GO" id="GO:0033786">
    <property type="term" value="F:heptose-1-phosphate adenylyltransferase activity"/>
    <property type="evidence" value="ECO:0007669"/>
    <property type="project" value="UniProtKB-UniRule"/>
</dbReference>
<dbReference type="GO" id="GO:0016773">
    <property type="term" value="F:phosphotransferase activity, alcohol group as acceptor"/>
    <property type="evidence" value="ECO:0007669"/>
    <property type="project" value="InterPro"/>
</dbReference>
<dbReference type="GO" id="GO:0097171">
    <property type="term" value="P:ADP-L-glycero-beta-D-manno-heptose biosynthetic process"/>
    <property type="evidence" value="ECO:0007669"/>
    <property type="project" value="UniProtKB-UniPathway"/>
</dbReference>
<dbReference type="CDD" id="cd01172">
    <property type="entry name" value="RfaE_like"/>
    <property type="match status" value="1"/>
</dbReference>
<dbReference type="FunFam" id="3.40.1190.20:FF:000002">
    <property type="entry name" value="Bifunctional protein HldE"/>
    <property type="match status" value="1"/>
</dbReference>
<dbReference type="FunFam" id="3.40.50.620:FF:000028">
    <property type="entry name" value="Bifunctional protein HldE"/>
    <property type="match status" value="1"/>
</dbReference>
<dbReference type="Gene3D" id="3.40.1190.20">
    <property type="match status" value="1"/>
</dbReference>
<dbReference type="Gene3D" id="3.40.50.620">
    <property type="entry name" value="HUPs"/>
    <property type="match status" value="1"/>
</dbReference>
<dbReference type="HAMAP" id="MF_01603">
    <property type="entry name" value="HldE"/>
    <property type="match status" value="1"/>
</dbReference>
<dbReference type="InterPro" id="IPR023030">
    <property type="entry name" value="Bifunc_HldE"/>
</dbReference>
<dbReference type="InterPro" id="IPR002173">
    <property type="entry name" value="Carboh/pur_kinase_PfkB_CS"/>
</dbReference>
<dbReference type="InterPro" id="IPR004821">
    <property type="entry name" value="Cyt_trans-like"/>
</dbReference>
<dbReference type="InterPro" id="IPR011611">
    <property type="entry name" value="PfkB_dom"/>
</dbReference>
<dbReference type="InterPro" id="IPR011913">
    <property type="entry name" value="RfaE_dom_I"/>
</dbReference>
<dbReference type="InterPro" id="IPR011914">
    <property type="entry name" value="RfaE_dom_II"/>
</dbReference>
<dbReference type="InterPro" id="IPR029056">
    <property type="entry name" value="Ribokinase-like"/>
</dbReference>
<dbReference type="InterPro" id="IPR014729">
    <property type="entry name" value="Rossmann-like_a/b/a_fold"/>
</dbReference>
<dbReference type="NCBIfam" id="TIGR00125">
    <property type="entry name" value="cyt_tran_rel"/>
    <property type="match status" value="1"/>
</dbReference>
<dbReference type="NCBIfam" id="NF008454">
    <property type="entry name" value="PRK11316.1"/>
    <property type="match status" value="1"/>
</dbReference>
<dbReference type="NCBIfam" id="TIGR02198">
    <property type="entry name" value="rfaE_dom_I"/>
    <property type="match status" value="1"/>
</dbReference>
<dbReference type="NCBIfam" id="TIGR02199">
    <property type="entry name" value="rfaE_dom_II"/>
    <property type="match status" value="1"/>
</dbReference>
<dbReference type="PANTHER" id="PTHR46969">
    <property type="entry name" value="BIFUNCTIONAL PROTEIN HLDE"/>
    <property type="match status" value="1"/>
</dbReference>
<dbReference type="PANTHER" id="PTHR46969:SF1">
    <property type="entry name" value="BIFUNCTIONAL PROTEIN HLDE"/>
    <property type="match status" value="1"/>
</dbReference>
<dbReference type="Pfam" id="PF01467">
    <property type="entry name" value="CTP_transf_like"/>
    <property type="match status" value="1"/>
</dbReference>
<dbReference type="Pfam" id="PF00294">
    <property type="entry name" value="PfkB"/>
    <property type="match status" value="1"/>
</dbReference>
<dbReference type="SUPFAM" id="SSF52374">
    <property type="entry name" value="Nucleotidylyl transferase"/>
    <property type="match status" value="1"/>
</dbReference>
<dbReference type="SUPFAM" id="SSF53613">
    <property type="entry name" value="Ribokinase-like"/>
    <property type="match status" value="1"/>
</dbReference>
<dbReference type="PROSITE" id="PS00583">
    <property type="entry name" value="PFKB_KINASES_1"/>
    <property type="match status" value="1"/>
</dbReference>
<name>HLDE_SHISS</name>
<sequence>MKVTLPEFERAGVMVVGDVMLDRYWYGPSSRISPEAPVPVVKVNTIEERPGGAANVAMNIASLGANARLVGLTGIDDAARALSKSLADVNVKCDFVSVPTHPTITKLRVLSRNQQLIRLDFEEGFEGVDPQPLHERINQALSSIGALVLSDYAKGALASVQQMIQLARKAGVPVLIDPKGTDFERYRGATLLTPNLSEFEAVVGKCKTEEEIVERGMKLIADYELSALLVTRSEQGMSLLQPGKAPLHMPTQAQEVYDVTGAGDTVIGVLAATLAAGNSLEEACFFANAAAGVVVGKLGTSTVSPIELENAVRGRADTGFGVMTEEELKLAVAAARKRGEKVVMTNGVFDILHAGHVSYLANARKQGDRLIVAVNSDASTKRLKGDSRPVNPLEQRMIVLGALEAVDWVVSFEEDTPQRLIAGILPDLLVKGGDYKPEEIAGSKEVWANGGEVLVLNFEDGCSTTNIIKKIQQDKKG</sequence>
<comment type="function">
    <text evidence="1">Catalyzes the phosphorylation of D-glycero-D-manno-heptose 7-phosphate at the C-1 position to selectively form D-glycero-beta-D-manno-heptose-1,7-bisphosphate.</text>
</comment>
<comment type="function">
    <text evidence="1">Catalyzes the ADP transfer from ATP to D-glycero-beta-D-manno-heptose 1-phosphate, yielding ADP-D-glycero-beta-D-manno-heptose.</text>
</comment>
<comment type="catalytic activity">
    <reaction evidence="1">
        <text>D-glycero-beta-D-manno-heptose 7-phosphate + ATP = D-glycero-beta-D-manno-heptose 1,7-bisphosphate + ADP + H(+)</text>
        <dbReference type="Rhea" id="RHEA:27473"/>
        <dbReference type="ChEBI" id="CHEBI:15378"/>
        <dbReference type="ChEBI" id="CHEBI:30616"/>
        <dbReference type="ChEBI" id="CHEBI:60204"/>
        <dbReference type="ChEBI" id="CHEBI:60208"/>
        <dbReference type="ChEBI" id="CHEBI:456216"/>
        <dbReference type="EC" id="2.7.1.167"/>
    </reaction>
</comment>
<comment type="catalytic activity">
    <reaction evidence="1">
        <text>D-glycero-beta-D-manno-heptose 1-phosphate + ATP + H(+) = ADP-D-glycero-beta-D-manno-heptose + diphosphate</text>
        <dbReference type="Rhea" id="RHEA:27465"/>
        <dbReference type="ChEBI" id="CHEBI:15378"/>
        <dbReference type="ChEBI" id="CHEBI:30616"/>
        <dbReference type="ChEBI" id="CHEBI:33019"/>
        <dbReference type="ChEBI" id="CHEBI:59967"/>
        <dbReference type="ChEBI" id="CHEBI:61593"/>
        <dbReference type="EC" id="2.7.7.70"/>
    </reaction>
</comment>
<comment type="pathway">
    <text evidence="1">Nucleotide-sugar biosynthesis; ADP-L-glycero-beta-D-manno-heptose biosynthesis; ADP-L-glycero-beta-D-manno-heptose from D-glycero-beta-D-manno-heptose 7-phosphate: step 1/4.</text>
</comment>
<comment type="pathway">
    <text evidence="1">Nucleotide-sugar biosynthesis; ADP-L-glycero-beta-D-manno-heptose biosynthesis; ADP-L-glycero-beta-D-manno-heptose from D-glycero-beta-D-manno-heptose 7-phosphate: step 3/4.</text>
</comment>
<comment type="subunit">
    <text evidence="1">Homodimer.</text>
</comment>
<comment type="similarity">
    <text evidence="1">In the N-terminal section; belongs to the carbohydrate kinase PfkB family.</text>
</comment>
<comment type="similarity">
    <text evidence="1">In the C-terminal section; belongs to the cytidylyltransferase family.</text>
</comment>
<keyword id="KW-0007">Acetylation</keyword>
<keyword id="KW-0067">ATP-binding</keyword>
<keyword id="KW-0119">Carbohydrate metabolism</keyword>
<keyword id="KW-0418">Kinase</keyword>
<keyword id="KW-0511">Multifunctional enzyme</keyword>
<keyword id="KW-0547">Nucleotide-binding</keyword>
<keyword id="KW-0548">Nucleotidyltransferase</keyword>
<keyword id="KW-1185">Reference proteome</keyword>
<keyword id="KW-0808">Transferase</keyword>
<gene>
    <name evidence="1" type="primary">hldE</name>
    <name type="ordered locus">SSON_3189</name>
</gene>
<organism>
    <name type="scientific">Shigella sonnei (strain Ss046)</name>
    <dbReference type="NCBI Taxonomy" id="300269"/>
    <lineage>
        <taxon>Bacteria</taxon>
        <taxon>Pseudomonadati</taxon>
        <taxon>Pseudomonadota</taxon>
        <taxon>Gammaproteobacteria</taxon>
        <taxon>Enterobacterales</taxon>
        <taxon>Enterobacteriaceae</taxon>
        <taxon>Shigella</taxon>
    </lineage>
</organism>
<proteinExistence type="inferred from homology"/>
<reference key="1">
    <citation type="journal article" date="2005" name="Nucleic Acids Res.">
        <title>Genome dynamics and diversity of Shigella species, the etiologic agents of bacillary dysentery.</title>
        <authorList>
            <person name="Yang F."/>
            <person name="Yang J."/>
            <person name="Zhang X."/>
            <person name="Chen L."/>
            <person name="Jiang Y."/>
            <person name="Yan Y."/>
            <person name="Tang X."/>
            <person name="Wang J."/>
            <person name="Xiong Z."/>
            <person name="Dong J."/>
            <person name="Xue Y."/>
            <person name="Zhu Y."/>
            <person name="Xu X."/>
            <person name="Sun L."/>
            <person name="Chen S."/>
            <person name="Nie H."/>
            <person name="Peng J."/>
            <person name="Xu J."/>
            <person name="Wang Y."/>
            <person name="Yuan Z."/>
            <person name="Wen Y."/>
            <person name="Yao Z."/>
            <person name="Shen Y."/>
            <person name="Qiang B."/>
            <person name="Hou Y."/>
            <person name="Yu J."/>
            <person name="Jin Q."/>
        </authorList>
    </citation>
    <scope>NUCLEOTIDE SEQUENCE [LARGE SCALE GENOMIC DNA]</scope>
    <source>
        <strain>Ss046</strain>
    </source>
</reference>